<reference key="1">
    <citation type="journal article" date="2000" name="Nature">
        <title>Genome sequence of the endocellular bacterial symbiont of aphids Buchnera sp. APS.</title>
        <authorList>
            <person name="Shigenobu S."/>
            <person name="Watanabe H."/>
            <person name="Hattori M."/>
            <person name="Sakaki Y."/>
            <person name="Ishikawa H."/>
        </authorList>
    </citation>
    <scope>NUCLEOTIDE SEQUENCE [LARGE SCALE GENOMIC DNA]</scope>
    <source>
        <strain>APS</strain>
    </source>
</reference>
<accession>P57133</accession>
<evidence type="ECO:0000255" key="1">
    <source>
        <dbReference type="HAMAP-Rule" id="MF_00141"/>
    </source>
</evidence>
<evidence type="ECO:0000305" key="2"/>
<proteinExistence type="inferred from homology"/>
<keyword id="KW-0963">Cytoplasm</keyword>
<keyword id="KW-0251">Elongation factor</keyword>
<keyword id="KW-0379">Hydroxylation</keyword>
<keyword id="KW-0648">Protein biosynthesis</keyword>
<keyword id="KW-1185">Reference proteome</keyword>
<organism>
    <name type="scientific">Buchnera aphidicola subsp. Acyrthosiphon pisum (strain APS)</name>
    <name type="common">Acyrthosiphon pisum symbiotic bacterium</name>
    <dbReference type="NCBI Taxonomy" id="107806"/>
    <lineage>
        <taxon>Bacteria</taxon>
        <taxon>Pseudomonadati</taxon>
        <taxon>Pseudomonadota</taxon>
        <taxon>Gammaproteobacteria</taxon>
        <taxon>Enterobacterales</taxon>
        <taxon>Erwiniaceae</taxon>
        <taxon>Buchnera</taxon>
    </lineage>
</organism>
<comment type="function">
    <text evidence="1">Involved in peptide bond synthesis. Alleviates ribosome stalling that occurs when 3 or more consecutive Pro residues or the sequence PPG is present in a protein, possibly by augmenting the peptidyl transferase activity of the ribosome. Modification of Lys-34 is required for alleviation.</text>
</comment>
<comment type="pathway">
    <text evidence="1">Protein biosynthesis; polypeptide chain elongation.</text>
</comment>
<comment type="subcellular location">
    <subcellularLocation>
        <location evidence="1">Cytoplasm</location>
    </subcellularLocation>
</comment>
<comment type="PTM">
    <text evidence="1">May be beta-lysylated on the epsilon-amino group of Lys-34 by the combined action of EpmA and EpmB, and then hydroxylated on the C5 position of the same residue by EpmC (if this protein is present). Lysylation is critical for the stimulatory effect of EF-P on peptide-bond formation. The lysylation moiety may extend toward the peptidyltransferase center and stabilize the terminal 3-CCA end of the tRNA. Hydroxylation of the C5 position on Lys-34 may allow additional potential stabilizing hydrogen-bond interactions with the P-tRNA.</text>
</comment>
<comment type="similarity">
    <text evidence="1">Belongs to the elongation factor P family.</text>
</comment>
<comment type="sequence caution" evidence="2">
    <conflict type="erroneous initiation">
        <sequence resource="EMBL-CDS" id="BAB12747"/>
    </conflict>
    <text>Extended N-terminus.</text>
</comment>
<sequence length="189" mass="21721">MRIYHSNNFRSGRKIIFENEPCLIESSEFVKPGKGQSFVRVKLRKLLTKQLIEKTFKSTDSLEIADIIEYTLSYLYNDGRFWYFINNNTFEELSVDEKIIGVHKKWLLEQDTCIVTLWNNQPISITPNNFVNLKVIHVQATLKGDTINTSSTKLATLSTGAIVRVPLFIQVGSLIKVDTRSGEYVSRIK</sequence>
<gene>
    <name evidence="1" type="primary">efp</name>
    <name type="ordered locus">BU020</name>
</gene>
<protein>
    <recommendedName>
        <fullName evidence="1">Elongation factor P</fullName>
        <shortName evidence="1">EF-P</shortName>
    </recommendedName>
</protein>
<name>EFP_BUCAI</name>
<feature type="chain" id="PRO_0000094215" description="Elongation factor P">
    <location>
        <begin position="1"/>
        <end position="189"/>
    </location>
</feature>
<feature type="modified residue" description="N6-(3,6-diaminohexanoyl)-5-hydroxylysine" evidence="1">
    <location>
        <position position="34"/>
    </location>
</feature>
<dbReference type="EMBL" id="BA000003">
    <property type="protein sequence ID" value="BAB12747.1"/>
    <property type="status" value="ALT_INIT"/>
    <property type="molecule type" value="Genomic_DNA"/>
</dbReference>
<dbReference type="RefSeq" id="NP_239861.1">
    <property type="nucleotide sequence ID" value="NC_002528.1"/>
</dbReference>
<dbReference type="RefSeq" id="WP_014498809.1">
    <property type="nucleotide sequence ID" value="NZ_AP036055.1"/>
</dbReference>
<dbReference type="SMR" id="P57133"/>
<dbReference type="STRING" id="563178.BUAP5A_020"/>
<dbReference type="EnsemblBacteria" id="BAB12747">
    <property type="protein sequence ID" value="BAB12747"/>
    <property type="gene ID" value="BAB12747"/>
</dbReference>
<dbReference type="KEGG" id="buc:BU020"/>
<dbReference type="PATRIC" id="fig|107806.10.peg.32"/>
<dbReference type="eggNOG" id="COG0231">
    <property type="taxonomic scope" value="Bacteria"/>
</dbReference>
<dbReference type="HOGENOM" id="CLU_074944_0_0_6"/>
<dbReference type="UniPathway" id="UPA00345"/>
<dbReference type="Proteomes" id="UP000001806">
    <property type="component" value="Chromosome"/>
</dbReference>
<dbReference type="GO" id="GO:0005737">
    <property type="term" value="C:cytoplasm"/>
    <property type="evidence" value="ECO:0007669"/>
    <property type="project" value="UniProtKB-SubCell"/>
</dbReference>
<dbReference type="GO" id="GO:0003746">
    <property type="term" value="F:translation elongation factor activity"/>
    <property type="evidence" value="ECO:0007669"/>
    <property type="project" value="UniProtKB-UniRule"/>
</dbReference>
<dbReference type="GO" id="GO:0043043">
    <property type="term" value="P:peptide biosynthetic process"/>
    <property type="evidence" value="ECO:0007669"/>
    <property type="project" value="InterPro"/>
</dbReference>
<dbReference type="CDD" id="cd04470">
    <property type="entry name" value="S1_EF-P_repeat_1"/>
    <property type="match status" value="1"/>
</dbReference>
<dbReference type="CDD" id="cd05794">
    <property type="entry name" value="S1_EF-P_repeat_2"/>
    <property type="match status" value="1"/>
</dbReference>
<dbReference type="FunFam" id="2.30.30.30:FF:000003">
    <property type="entry name" value="Elongation factor P"/>
    <property type="match status" value="1"/>
</dbReference>
<dbReference type="FunFam" id="2.40.50.140:FF:000004">
    <property type="entry name" value="Elongation factor P"/>
    <property type="match status" value="1"/>
</dbReference>
<dbReference type="FunFam" id="2.40.50.140:FF:000009">
    <property type="entry name" value="Elongation factor P"/>
    <property type="match status" value="1"/>
</dbReference>
<dbReference type="Gene3D" id="2.30.30.30">
    <property type="match status" value="1"/>
</dbReference>
<dbReference type="Gene3D" id="2.40.50.140">
    <property type="entry name" value="Nucleic acid-binding proteins"/>
    <property type="match status" value="2"/>
</dbReference>
<dbReference type="HAMAP" id="MF_00141">
    <property type="entry name" value="EF_P"/>
    <property type="match status" value="1"/>
</dbReference>
<dbReference type="InterPro" id="IPR015365">
    <property type="entry name" value="Elong-fact-P_C"/>
</dbReference>
<dbReference type="InterPro" id="IPR012340">
    <property type="entry name" value="NA-bd_OB-fold"/>
</dbReference>
<dbReference type="InterPro" id="IPR014722">
    <property type="entry name" value="Rib_uL2_dom2"/>
</dbReference>
<dbReference type="InterPro" id="IPR020599">
    <property type="entry name" value="Transl_elong_fac_P/YeiP"/>
</dbReference>
<dbReference type="InterPro" id="IPR013185">
    <property type="entry name" value="Transl_elong_KOW-like"/>
</dbReference>
<dbReference type="InterPro" id="IPR001059">
    <property type="entry name" value="Transl_elong_P/YeiP_cen"/>
</dbReference>
<dbReference type="InterPro" id="IPR013852">
    <property type="entry name" value="Transl_elong_P/YeiP_CS"/>
</dbReference>
<dbReference type="InterPro" id="IPR011768">
    <property type="entry name" value="Transl_elongation_fac_P"/>
</dbReference>
<dbReference type="InterPro" id="IPR008991">
    <property type="entry name" value="Translation_prot_SH3-like_sf"/>
</dbReference>
<dbReference type="NCBIfam" id="TIGR00038">
    <property type="entry name" value="efp"/>
    <property type="match status" value="1"/>
</dbReference>
<dbReference type="NCBIfam" id="NF001810">
    <property type="entry name" value="PRK00529.1"/>
    <property type="match status" value="1"/>
</dbReference>
<dbReference type="PANTHER" id="PTHR30053">
    <property type="entry name" value="ELONGATION FACTOR P"/>
    <property type="match status" value="1"/>
</dbReference>
<dbReference type="PANTHER" id="PTHR30053:SF12">
    <property type="entry name" value="ELONGATION FACTOR P (EF-P) FAMILY PROTEIN"/>
    <property type="match status" value="1"/>
</dbReference>
<dbReference type="Pfam" id="PF01132">
    <property type="entry name" value="EFP"/>
    <property type="match status" value="1"/>
</dbReference>
<dbReference type="Pfam" id="PF08207">
    <property type="entry name" value="EFP_N"/>
    <property type="match status" value="1"/>
</dbReference>
<dbReference type="Pfam" id="PF09285">
    <property type="entry name" value="Elong-fact-P_C"/>
    <property type="match status" value="1"/>
</dbReference>
<dbReference type="PIRSF" id="PIRSF005901">
    <property type="entry name" value="EF-P"/>
    <property type="match status" value="1"/>
</dbReference>
<dbReference type="SMART" id="SM01185">
    <property type="entry name" value="EFP"/>
    <property type="match status" value="1"/>
</dbReference>
<dbReference type="SMART" id="SM00841">
    <property type="entry name" value="Elong-fact-P_C"/>
    <property type="match status" value="1"/>
</dbReference>
<dbReference type="SUPFAM" id="SSF50249">
    <property type="entry name" value="Nucleic acid-binding proteins"/>
    <property type="match status" value="2"/>
</dbReference>
<dbReference type="SUPFAM" id="SSF50104">
    <property type="entry name" value="Translation proteins SH3-like domain"/>
    <property type="match status" value="1"/>
</dbReference>
<dbReference type="PROSITE" id="PS01275">
    <property type="entry name" value="EFP"/>
    <property type="match status" value="1"/>
</dbReference>